<reference key="1">
    <citation type="journal article" date="1995" name="Mol. Gen. Genet.">
        <title>Nucleotide sequence of the recF gene cluster from Staphylococcus aureus and complementation analysis in Bacillus subtilis recF mutants.</title>
        <authorList>
            <person name="Alonso J.C."/>
            <person name="Fisher L.M."/>
        </authorList>
    </citation>
    <scope>NUCLEOTIDE SEQUENCE [GENOMIC DNA]</scope>
    <source>
        <strain>YB886</strain>
    </source>
</reference>
<sequence length="377" mass="41914">MMEFTIKRDYFITQLNDTLKAISPRTTLPILTGIKIDAKEHEVILTGSDSEISIEITIPKTVDGEDIVNISETGSVVLPGRFFVDIIKKLPGKDVKLSTNEQFQTLITSGHSEFNLSGLDPDQYPLLPQVSRDDAIQLSVKVLKNVIAQTNFAVSTSETRPVLTGVNWLIQENELICTATDSHRLAVRKLQLEDVSENKNVIIPGKALAELNKIMSDNEEDIDIFFASNQVLFKVGNVNFISRLLEGHYPDTTRLFPENYEIKLSIDNGEFYHAIDRASLLAREGGNNVIKLSTGDDVVELSSTSPEIGTVKEEVDANDVEGGSLKISFNSKYMMDALKAIDNDEVEVEFFGTMKPFILKPKGDDSVTQLILPIRTY</sequence>
<gene>
    <name type="primary">dnaN</name>
</gene>
<name>DPO3B_STAAU</name>
<protein>
    <recommendedName>
        <fullName>Beta sliding clamp</fullName>
        <shortName>Beta clamp</shortName>
        <shortName>Sliding clamp</shortName>
    </recommendedName>
    <alternativeName>
        <fullName>Beta-clamp processivity factor</fullName>
    </alternativeName>
    <alternativeName>
        <fullName>DNA polymerase III beta sliding clamp subunit</fullName>
    </alternativeName>
    <alternativeName>
        <fullName>DNA polymerase III subunit beta</fullName>
    </alternativeName>
</protein>
<organism>
    <name type="scientific">Staphylococcus aureus</name>
    <dbReference type="NCBI Taxonomy" id="1280"/>
    <lineage>
        <taxon>Bacteria</taxon>
        <taxon>Bacillati</taxon>
        <taxon>Bacillota</taxon>
        <taxon>Bacilli</taxon>
        <taxon>Bacillales</taxon>
        <taxon>Staphylococcaceae</taxon>
        <taxon>Staphylococcus</taxon>
    </lineage>
</organism>
<comment type="function">
    <text evidence="1">Confers DNA tethering and processivity to DNA polymerases and other proteins. Acts as a clamp, forming a ring around DNA (a reaction catalyzed by the clamp-loading complex) which diffuses in an ATP-independent manner freely and bidirectionally along dsDNA. Initially characterized for its ability to contact the catalytic subunit of DNA polymerase III (Pol III), a complex, multichain enzyme responsible for most of the replicative synthesis in bacteria; Pol III exhibits 3'-5' exonuclease proofreading activity. The beta chain is required for initiation of replication as well as for processivity of DNA replication.</text>
</comment>
<comment type="subunit">
    <text evidence="1">Forms a ring-shaped head-to-tail homodimer around DNA which binds and tethers DNA polymerases and other proteins to the DNA. The DNA replisome complex has a single clamp-loading complex (3 tau and 1 each of delta, delta', psi and chi subunits) which binds 3 Pol III cores (1 core on the leading strand and 2 on the lagging strand) each with a beta sliding clamp dimer. Additional proteins in the replisome are other copies of gamma, psi and chi, Ssb, DNA helicase and RNA primase.</text>
</comment>
<comment type="subcellular location">
    <subcellularLocation>
        <location evidence="1">Cytoplasm</location>
    </subcellularLocation>
</comment>
<comment type="similarity">
    <text evidence="2">Belongs to the beta sliding clamp family.</text>
</comment>
<proteinExistence type="evidence at protein level"/>
<feature type="chain" id="PRO_0000105468" description="Beta sliding clamp">
    <location>
        <begin position="1"/>
        <end position="377"/>
    </location>
</feature>
<feature type="strand" evidence="3">
    <location>
        <begin position="3"/>
        <end position="7"/>
    </location>
</feature>
<feature type="helix" evidence="3">
    <location>
        <begin position="8"/>
        <end position="15"/>
    </location>
</feature>
<feature type="turn" evidence="3">
    <location>
        <begin position="16"/>
        <end position="21"/>
    </location>
</feature>
<feature type="strand" evidence="3">
    <location>
        <begin position="27"/>
        <end position="30"/>
    </location>
</feature>
<feature type="strand" evidence="3">
    <location>
        <begin position="33"/>
        <end position="38"/>
    </location>
</feature>
<feature type="strand" evidence="3">
    <location>
        <begin position="40"/>
        <end position="48"/>
    </location>
</feature>
<feature type="strand" evidence="3">
    <location>
        <begin position="50"/>
        <end position="54"/>
    </location>
</feature>
<feature type="strand" evidence="3">
    <location>
        <begin position="58"/>
        <end position="62"/>
    </location>
</feature>
<feature type="strand" evidence="3">
    <location>
        <begin position="70"/>
        <end position="72"/>
    </location>
</feature>
<feature type="strand" evidence="3">
    <location>
        <begin position="74"/>
        <end position="79"/>
    </location>
</feature>
<feature type="helix" evidence="3">
    <location>
        <begin position="80"/>
        <end position="87"/>
    </location>
</feature>
<feature type="strand" evidence="3">
    <location>
        <begin position="91"/>
        <end position="99"/>
    </location>
</feature>
<feature type="strand" evidence="3">
    <location>
        <begin position="112"/>
        <end position="115"/>
    </location>
</feature>
<feature type="helix" evidence="3">
    <location>
        <begin position="121"/>
        <end position="123"/>
    </location>
</feature>
<feature type="strand" evidence="3">
    <location>
        <begin position="134"/>
        <end position="139"/>
    </location>
</feature>
<feature type="helix" evidence="3">
    <location>
        <begin position="140"/>
        <end position="150"/>
    </location>
</feature>
<feature type="turn" evidence="3">
    <location>
        <begin position="161"/>
        <end position="164"/>
    </location>
</feature>
<feature type="strand" evidence="3">
    <location>
        <begin position="165"/>
        <end position="170"/>
    </location>
</feature>
<feature type="strand" evidence="3">
    <location>
        <begin position="172"/>
        <end position="178"/>
    </location>
</feature>
<feature type="strand" evidence="3">
    <location>
        <begin position="182"/>
        <end position="191"/>
    </location>
</feature>
<feature type="strand" evidence="3">
    <location>
        <begin position="199"/>
        <end position="204"/>
    </location>
</feature>
<feature type="helix" evidence="3">
    <location>
        <begin position="205"/>
        <end position="207"/>
    </location>
</feature>
<feature type="turn" evidence="3">
    <location>
        <begin position="208"/>
        <end position="214"/>
    </location>
</feature>
<feature type="strand" evidence="3">
    <location>
        <begin position="221"/>
        <end position="226"/>
    </location>
</feature>
<feature type="strand" evidence="3">
    <location>
        <begin position="228"/>
        <end position="235"/>
    </location>
</feature>
<feature type="strand" evidence="3">
    <location>
        <begin position="241"/>
        <end position="243"/>
    </location>
</feature>
<feature type="helix" evidence="3">
    <location>
        <begin position="253"/>
        <end position="255"/>
    </location>
</feature>
<feature type="strand" evidence="3">
    <location>
        <begin position="261"/>
        <end position="263"/>
    </location>
</feature>
<feature type="helix" evidence="3">
    <location>
        <begin position="268"/>
        <end position="278"/>
    </location>
</feature>
<feature type="helix" evidence="3">
    <location>
        <begin position="281"/>
        <end position="283"/>
    </location>
</feature>
<feature type="strand" evidence="3">
    <location>
        <begin position="284"/>
        <end position="286"/>
    </location>
</feature>
<feature type="strand" evidence="3">
    <location>
        <begin position="289"/>
        <end position="291"/>
    </location>
</feature>
<feature type="strand" evidence="3">
    <location>
        <begin position="296"/>
        <end position="299"/>
    </location>
</feature>
<feature type="strand" evidence="3">
    <location>
        <begin position="302"/>
        <end position="305"/>
    </location>
</feature>
<feature type="turn" evidence="3">
    <location>
        <begin position="306"/>
        <end position="308"/>
    </location>
</feature>
<feature type="strand" evidence="3">
    <location>
        <begin position="309"/>
        <end position="312"/>
    </location>
</feature>
<feature type="strand" evidence="3">
    <location>
        <begin position="315"/>
        <end position="318"/>
    </location>
</feature>
<feature type="strand" evidence="3">
    <location>
        <begin position="328"/>
        <end position="330"/>
    </location>
</feature>
<feature type="helix" evidence="3">
    <location>
        <begin position="331"/>
        <end position="339"/>
    </location>
</feature>
<feature type="strand" evidence="3">
    <location>
        <begin position="343"/>
        <end position="350"/>
    </location>
</feature>
<feature type="strand" evidence="3">
    <location>
        <begin position="353"/>
        <end position="355"/>
    </location>
</feature>
<feature type="strand" evidence="3">
    <location>
        <begin position="357"/>
        <end position="361"/>
    </location>
</feature>
<feature type="strand" evidence="3">
    <location>
        <begin position="368"/>
        <end position="371"/>
    </location>
</feature>
<keyword id="KW-0002">3D-structure</keyword>
<keyword id="KW-0963">Cytoplasm</keyword>
<keyword id="KW-0235">DNA replication</keyword>
<keyword id="KW-0238">DNA-binding</keyword>
<keyword id="KW-0239">DNA-directed DNA polymerase</keyword>
<keyword id="KW-0548">Nucleotidyltransferase</keyword>
<keyword id="KW-0808">Transferase</keyword>
<evidence type="ECO:0000250" key="1">
    <source>
        <dbReference type="UniProtKB" id="P0A988"/>
    </source>
</evidence>
<evidence type="ECO:0000305" key="2"/>
<evidence type="ECO:0007829" key="3">
    <source>
        <dbReference type="PDB" id="7EVP"/>
    </source>
</evidence>
<dbReference type="PIR" id="S54708">
    <property type="entry name" value="S54708"/>
</dbReference>
<dbReference type="RefSeq" id="WP_000969811.1">
    <property type="nucleotide sequence ID" value="NZ_WYDB01000001.1"/>
</dbReference>
<dbReference type="PDB" id="7EVP">
    <property type="method" value="EM"/>
    <property type="resolution" value="3.20 A"/>
    <property type="chains" value="A/B=1-377"/>
</dbReference>
<dbReference type="PDBsum" id="7EVP"/>
<dbReference type="EMDB" id="EMD-31339"/>
<dbReference type="SMR" id="P0A024"/>
<dbReference type="OMA" id="YLIMPVR"/>
<dbReference type="GO" id="GO:0005737">
    <property type="term" value="C:cytoplasm"/>
    <property type="evidence" value="ECO:0007669"/>
    <property type="project" value="UniProtKB-SubCell"/>
</dbReference>
<dbReference type="GO" id="GO:0009360">
    <property type="term" value="C:DNA polymerase III complex"/>
    <property type="evidence" value="ECO:0007669"/>
    <property type="project" value="InterPro"/>
</dbReference>
<dbReference type="GO" id="GO:0008408">
    <property type="term" value="F:3'-5' exonuclease activity"/>
    <property type="evidence" value="ECO:0007669"/>
    <property type="project" value="InterPro"/>
</dbReference>
<dbReference type="GO" id="GO:0003677">
    <property type="term" value="F:DNA binding"/>
    <property type="evidence" value="ECO:0007669"/>
    <property type="project" value="UniProtKB-KW"/>
</dbReference>
<dbReference type="GO" id="GO:0003887">
    <property type="term" value="F:DNA-directed DNA polymerase activity"/>
    <property type="evidence" value="ECO:0007669"/>
    <property type="project" value="UniProtKB-KW"/>
</dbReference>
<dbReference type="GO" id="GO:0006271">
    <property type="term" value="P:DNA strand elongation involved in DNA replication"/>
    <property type="evidence" value="ECO:0007669"/>
    <property type="project" value="TreeGrafter"/>
</dbReference>
<dbReference type="CDD" id="cd00140">
    <property type="entry name" value="beta_clamp"/>
    <property type="match status" value="1"/>
</dbReference>
<dbReference type="FunFam" id="3.10.150.10:FF:000007">
    <property type="entry name" value="Beta sliding clamp"/>
    <property type="match status" value="1"/>
</dbReference>
<dbReference type="Gene3D" id="3.70.10.10">
    <property type="match status" value="1"/>
</dbReference>
<dbReference type="Gene3D" id="3.10.150.10">
    <property type="entry name" value="DNA Polymerase III, subunit A, domain 2"/>
    <property type="match status" value="1"/>
</dbReference>
<dbReference type="InterPro" id="IPR046938">
    <property type="entry name" value="DNA_clamp_sf"/>
</dbReference>
<dbReference type="InterPro" id="IPR001001">
    <property type="entry name" value="DNA_polIII_beta"/>
</dbReference>
<dbReference type="InterPro" id="IPR022635">
    <property type="entry name" value="DNA_polIII_beta_C"/>
</dbReference>
<dbReference type="InterPro" id="IPR022637">
    <property type="entry name" value="DNA_polIII_beta_cen"/>
</dbReference>
<dbReference type="InterPro" id="IPR022634">
    <property type="entry name" value="DNA_polIII_beta_N"/>
</dbReference>
<dbReference type="NCBIfam" id="TIGR00663">
    <property type="entry name" value="dnan"/>
    <property type="match status" value="1"/>
</dbReference>
<dbReference type="PANTHER" id="PTHR30478:SF0">
    <property type="entry name" value="BETA SLIDING CLAMP"/>
    <property type="match status" value="1"/>
</dbReference>
<dbReference type="PANTHER" id="PTHR30478">
    <property type="entry name" value="DNA POLYMERASE III SUBUNIT BETA"/>
    <property type="match status" value="1"/>
</dbReference>
<dbReference type="Pfam" id="PF00712">
    <property type="entry name" value="DNA_pol3_beta"/>
    <property type="match status" value="1"/>
</dbReference>
<dbReference type="Pfam" id="PF02767">
    <property type="entry name" value="DNA_pol3_beta_2"/>
    <property type="match status" value="1"/>
</dbReference>
<dbReference type="Pfam" id="PF02768">
    <property type="entry name" value="DNA_pol3_beta_3"/>
    <property type="match status" value="1"/>
</dbReference>
<dbReference type="PIRSF" id="PIRSF000804">
    <property type="entry name" value="DNA_pol_III_b"/>
    <property type="match status" value="1"/>
</dbReference>
<dbReference type="SMART" id="SM00480">
    <property type="entry name" value="POL3Bc"/>
    <property type="match status" value="1"/>
</dbReference>
<dbReference type="SUPFAM" id="SSF55979">
    <property type="entry name" value="DNA clamp"/>
    <property type="match status" value="3"/>
</dbReference>
<accession>P0A024</accession>
<accession>P50029</accession>